<proteinExistence type="inferred from homology"/>
<keyword id="KW-0418">Kinase</keyword>
<keyword id="KW-1185">Reference proteome</keyword>
<keyword id="KW-0808">Transferase</keyword>
<keyword id="KW-0902">Two-component regulatory system</keyword>
<sequence length="370" mass="41661">MIHAGQSSSLTPAASPPHRRGKHKIFIGMAPGVGKTYRMLEEGQQLKQEGFDVVIGLLETHGREETAQKAIGLEQVPLRTMIWQGRSLLEMDTGAILARSPQLALVDELAHTNIPGAEREKRYQDVELILAAGIDVYSTINIQHLESLNDLVYKISGVVVRERVPDRLLDEADEVVVVDVTPETLQERLQEGKIYAQDKINQALQNFFKRQNLVALRELALREVANNIEENSRHDQQTNHCAVHERILVCISTYPNSIQLLRRGGRIASQMNGRLFVLFVAPTNQFLSKVEALHVETCQHLTQEFEGEFIRQESDNVVGAIAQVATTYRITQIVLGESRRSRWHLLIKGSIIQRLMRCLPTVDLHIIANG</sequence>
<evidence type="ECO:0000250" key="1"/>
<evidence type="ECO:0000256" key="2">
    <source>
        <dbReference type="SAM" id="MobiDB-lite"/>
    </source>
</evidence>
<evidence type="ECO:0000305" key="3"/>
<protein>
    <recommendedName>
        <fullName>Putative sensor protein KdpD</fullName>
        <ecNumber>2.7.3.-</ecNumber>
    </recommendedName>
</protein>
<feature type="chain" id="PRO_0000074775" description="Putative sensor protein KdpD">
    <location>
        <begin position="1"/>
        <end position="370"/>
    </location>
</feature>
<feature type="region of interest" description="Disordered" evidence="2">
    <location>
        <begin position="1"/>
        <end position="22"/>
    </location>
</feature>
<feature type="compositionally biased region" description="Polar residues" evidence="2">
    <location>
        <begin position="1"/>
        <end position="12"/>
    </location>
</feature>
<comment type="function">
    <text evidence="1">Member of the two-component regulatory system KdpD/KdpE involved in the regulation of the kdp operon. KdpD may function as a membrane-associated protein kinase that phosphorylates KdpE in response to environmental signals (By similarity).</text>
</comment>
<comment type="similarity">
    <text evidence="3">In the C-terminal section; belongs to the universal stress protein A family.</text>
</comment>
<name>KDPD_SYNY3</name>
<organism>
    <name type="scientific">Synechocystis sp. (strain ATCC 27184 / PCC 6803 / Kazusa)</name>
    <dbReference type="NCBI Taxonomy" id="1111708"/>
    <lineage>
        <taxon>Bacteria</taxon>
        <taxon>Bacillati</taxon>
        <taxon>Cyanobacteriota</taxon>
        <taxon>Cyanophyceae</taxon>
        <taxon>Synechococcales</taxon>
        <taxon>Merismopediaceae</taxon>
        <taxon>Synechocystis</taxon>
    </lineage>
</organism>
<gene>
    <name type="primary">kdpD</name>
    <name type="ordered locus">slr1731</name>
</gene>
<dbReference type="EC" id="2.7.3.-"/>
<dbReference type="EMBL" id="BA000022">
    <property type="protein sequence ID" value="BAA17932.1"/>
    <property type="molecule type" value="Genomic_DNA"/>
</dbReference>
<dbReference type="PIR" id="S75070">
    <property type="entry name" value="S75070"/>
</dbReference>
<dbReference type="SMR" id="P73870"/>
<dbReference type="IntAct" id="P73870">
    <property type="interactions" value="2"/>
</dbReference>
<dbReference type="STRING" id="1148.gene:10498801"/>
<dbReference type="PaxDb" id="1148-1653015"/>
<dbReference type="EnsemblBacteria" id="BAA17932">
    <property type="protein sequence ID" value="BAA17932"/>
    <property type="gene ID" value="BAA17932"/>
</dbReference>
<dbReference type="KEGG" id="syn:slr1731"/>
<dbReference type="eggNOG" id="COG2205">
    <property type="taxonomic scope" value="Bacteria"/>
</dbReference>
<dbReference type="InParanoid" id="P73870"/>
<dbReference type="PhylomeDB" id="P73870"/>
<dbReference type="Proteomes" id="UP000001425">
    <property type="component" value="Chromosome"/>
</dbReference>
<dbReference type="GO" id="GO:0016020">
    <property type="term" value="C:membrane"/>
    <property type="evidence" value="ECO:0007669"/>
    <property type="project" value="InterPro"/>
</dbReference>
<dbReference type="GO" id="GO:0000155">
    <property type="term" value="F:phosphorelay sensor kinase activity"/>
    <property type="evidence" value="ECO:0007669"/>
    <property type="project" value="InterPro"/>
</dbReference>
<dbReference type="CDD" id="cd01987">
    <property type="entry name" value="USP_KdpD-like"/>
    <property type="match status" value="1"/>
</dbReference>
<dbReference type="FunFam" id="3.40.50.300:FF:000483">
    <property type="entry name" value="Sensor histidine kinase KdpD"/>
    <property type="match status" value="1"/>
</dbReference>
<dbReference type="FunFam" id="3.40.50.620:FF:000112">
    <property type="entry name" value="Sensor histidine kinase KdpD"/>
    <property type="match status" value="1"/>
</dbReference>
<dbReference type="Gene3D" id="3.40.50.620">
    <property type="entry name" value="HUPs"/>
    <property type="match status" value="1"/>
</dbReference>
<dbReference type="Gene3D" id="3.40.50.300">
    <property type="entry name" value="P-loop containing nucleotide triphosphate hydrolases"/>
    <property type="match status" value="1"/>
</dbReference>
<dbReference type="InterPro" id="IPR052023">
    <property type="entry name" value="Histidine_kinase_KdpD"/>
</dbReference>
<dbReference type="InterPro" id="IPR027417">
    <property type="entry name" value="P-loop_NTPase"/>
</dbReference>
<dbReference type="InterPro" id="IPR014729">
    <property type="entry name" value="Rossmann-like_a/b/a_fold"/>
</dbReference>
<dbReference type="InterPro" id="IPR003852">
    <property type="entry name" value="Sig_transdc_His_kinase_KdpD_N"/>
</dbReference>
<dbReference type="PANTHER" id="PTHR45569">
    <property type="entry name" value="SENSOR PROTEIN KDPD"/>
    <property type="match status" value="1"/>
</dbReference>
<dbReference type="PANTHER" id="PTHR45569:SF1">
    <property type="entry name" value="SENSOR PROTEIN KDPD"/>
    <property type="match status" value="1"/>
</dbReference>
<dbReference type="Pfam" id="PF02702">
    <property type="entry name" value="KdpD"/>
    <property type="match status" value="1"/>
</dbReference>
<dbReference type="SUPFAM" id="SSF52402">
    <property type="entry name" value="Adenine nucleotide alpha hydrolases-like"/>
    <property type="match status" value="1"/>
</dbReference>
<reference key="1">
    <citation type="journal article" date="1996" name="DNA Res.">
        <title>Sequence analysis of the genome of the unicellular cyanobacterium Synechocystis sp. strain PCC6803. II. Sequence determination of the entire genome and assignment of potential protein-coding regions.</title>
        <authorList>
            <person name="Kaneko T."/>
            <person name="Sato S."/>
            <person name="Kotani H."/>
            <person name="Tanaka A."/>
            <person name="Asamizu E."/>
            <person name="Nakamura Y."/>
            <person name="Miyajima N."/>
            <person name="Hirosawa M."/>
            <person name="Sugiura M."/>
            <person name="Sasamoto S."/>
            <person name="Kimura T."/>
            <person name="Hosouchi T."/>
            <person name="Matsuno A."/>
            <person name="Muraki A."/>
            <person name="Nakazaki N."/>
            <person name="Naruo K."/>
            <person name="Okumura S."/>
            <person name="Shimpo S."/>
            <person name="Takeuchi C."/>
            <person name="Wada T."/>
            <person name="Watanabe A."/>
            <person name="Yamada M."/>
            <person name="Yasuda M."/>
            <person name="Tabata S."/>
        </authorList>
    </citation>
    <scope>NUCLEOTIDE SEQUENCE [LARGE SCALE GENOMIC DNA]</scope>
    <source>
        <strain>ATCC 27184 / PCC 6803 / Kazusa</strain>
    </source>
</reference>
<accession>P73870</accession>